<organism>
    <name type="scientific">Burkholderia pseudomallei (strain K96243)</name>
    <dbReference type="NCBI Taxonomy" id="272560"/>
    <lineage>
        <taxon>Bacteria</taxon>
        <taxon>Pseudomonadati</taxon>
        <taxon>Pseudomonadota</taxon>
        <taxon>Betaproteobacteria</taxon>
        <taxon>Burkholderiales</taxon>
        <taxon>Burkholderiaceae</taxon>
        <taxon>Burkholderia</taxon>
        <taxon>pseudomallei group</taxon>
    </lineage>
</organism>
<keyword id="KW-0066">ATP synthesis</keyword>
<keyword id="KW-0067">ATP-binding</keyword>
<keyword id="KW-0997">Cell inner membrane</keyword>
<keyword id="KW-1003">Cell membrane</keyword>
<keyword id="KW-0139">CF(1)</keyword>
<keyword id="KW-0375">Hydrogen ion transport</keyword>
<keyword id="KW-0406">Ion transport</keyword>
<keyword id="KW-0472">Membrane</keyword>
<keyword id="KW-0547">Nucleotide-binding</keyword>
<keyword id="KW-1185">Reference proteome</keyword>
<keyword id="KW-1278">Translocase</keyword>
<keyword id="KW-0813">Transport</keyword>
<dbReference type="EC" id="7.1.2.2" evidence="1"/>
<dbReference type="EMBL" id="BX571965">
    <property type="protein sequence ID" value="CAH37408.1"/>
    <property type="molecule type" value="Genomic_DNA"/>
</dbReference>
<dbReference type="RefSeq" id="YP_109989.1">
    <property type="nucleotide sequence ID" value="NC_006350.1"/>
</dbReference>
<dbReference type="SMR" id="Q63PI0"/>
<dbReference type="STRING" id="272560.BPSL3396"/>
<dbReference type="KEGG" id="bps:BPSL3396"/>
<dbReference type="PATRIC" id="fig|272560.6.peg.3864"/>
<dbReference type="eggNOG" id="COG0055">
    <property type="taxonomic scope" value="Bacteria"/>
</dbReference>
<dbReference type="Proteomes" id="UP000000605">
    <property type="component" value="Chromosome 1"/>
</dbReference>
<dbReference type="GO" id="GO:0005886">
    <property type="term" value="C:plasma membrane"/>
    <property type="evidence" value="ECO:0007669"/>
    <property type="project" value="UniProtKB-SubCell"/>
</dbReference>
<dbReference type="GO" id="GO:0045259">
    <property type="term" value="C:proton-transporting ATP synthase complex"/>
    <property type="evidence" value="ECO:0007669"/>
    <property type="project" value="UniProtKB-KW"/>
</dbReference>
<dbReference type="GO" id="GO:0005524">
    <property type="term" value="F:ATP binding"/>
    <property type="evidence" value="ECO:0007669"/>
    <property type="project" value="UniProtKB-UniRule"/>
</dbReference>
<dbReference type="GO" id="GO:0016887">
    <property type="term" value="F:ATP hydrolysis activity"/>
    <property type="evidence" value="ECO:0007669"/>
    <property type="project" value="InterPro"/>
</dbReference>
<dbReference type="GO" id="GO:0046933">
    <property type="term" value="F:proton-transporting ATP synthase activity, rotational mechanism"/>
    <property type="evidence" value="ECO:0007669"/>
    <property type="project" value="UniProtKB-UniRule"/>
</dbReference>
<dbReference type="CDD" id="cd18110">
    <property type="entry name" value="ATP-synt_F1_beta_C"/>
    <property type="match status" value="1"/>
</dbReference>
<dbReference type="CDD" id="cd18115">
    <property type="entry name" value="ATP-synt_F1_beta_N"/>
    <property type="match status" value="1"/>
</dbReference>
<dbReference type="CDD" id="cd01133">
    <property type="entry name" value="F1-ATPase_beta_CD"/>
    <property type="match status" value="1"/>
</dbReference>
<dbReference type="FunFam" id="1.10.1140.10:FF:000001">
    <property type="entry name" value="ATP synthase subunit beta"/>
    <property type="match status" value="1"/>
</dbReference>
<dbReference type="FunFam" id="3.40.50.300:FF:000004">
    <property type="entry name" value="ATP synthase subunit beta"/>
    <property type="match status" value="1"/>
</dbReference>
<dbReference type="Gene3D" id="2.40.10.170">
    <property type="match status" value="1"/>
</dbReference>
<dbReference type="Gene3D" id="1.10.1140.10">
    <property type="entry name" value="Bovine Mitochondrial F1-atpase, Atp Synthase Beta Chain, Chain D, domain 3"/>
    <property type="match status" value="1"/>
</dbReference>
<dbReference type="Gene3D" id="3.40.50.300">
    <property type="entry name" value="P-loop containing nucleotide triphosphate hydrolases"/>
    <property type="match status" value="1"/>
</dbReference>
<dbReference type="HAMAP" id="MF_01347">
    <property type="entry name" value="ATP_synth_beta_bact"/>
    <property type="match status" value="1"/>
</dbReference>
<dbReference type="InterPro" id="IPR003593">
    <property type="entry name" value="AAA+_ATPase"/>
</dbReference>
<dbReference type="InterPro" id="IPR055190">
    <property type="entry name" value="ATP-synt_VA_C"/>
</dbReference>
<dbReference type="InterPro" id="IPR005722">
    <property type="entry name" value="ATP_synth_F1_bsu"/>
</dbReference>
<dbReference type="InterPro" id="IPR020003">
    <property type="entry name" value="ATPase_a/bsu_AS"/>
</dbReference>
<dbReference type="InterPro" id="IPR050053">
    <property type="entry name" value="ATPase_alpha/beta_chains"/>
</dbReference>
<dbReference type="InterPro" id="IPR004100">
    <property type="entry name" value="ATPase_F1/V1/A1_a/bsu_N"/>
</dbReference>
<dbReference type="InterPro" id="IPR036121">
    <property type="entry name" value="ATPase_F1/V1/A1_a/bsu_N_sf"/>
</dbReference>
<dbReference type="InterPro" id="IPR000194">
    <property type="entry name" value="ATPase_F1/V1/A1_a/bsu_nucl-bd"/>
</dbReference>
<dbReference type="InterPro" id="IPR024034">
    <property type="entry name" value="ATPase_F1/V1_b/a_C"/>
</dbReference>
<dbReference type="InterPro" id="IPR027417">
    <property type="entry name" value="P-loop_NTPase"/>
</dbReference>
<dbReference type="NCBIfam" id="TIGR01039">
    <property type="entry name" value="atpD"/>
    <property type="match status" value="1"/>
</dbReference>
<dbReference type="PANTHER" id="PTHR15184">
    <property type="entry name" value="ATP SYNTHASE"/>
    <property type="match status" value="1"/>
</dbReference>
<dbReference type="PANTHER" id="PTHR15184:SF71">
    <property type="entry name" value="ATP SYNTHASE SUBUNIT BETA, MITOCHONDRIAL"/>
    <property type="match status" value="1"/>
</dbReference>
<dbReference type="Pfam" id="PF00006">
    <property type="entry name" value="ATP-synt_ab"/>
    <property type="match status" value="1"/>
</dbReference>
<dbReference type="Pfam" id="PF02874">
    <property type="entry name" value="ATP-synt_ab_N"/>
    <property type="match status" value="1"/>
</dbReference>
<dbReference type="Pfam" id="PF22919">
    <property type="entry name" value="ATP-synt_VA_C"/>
    <property type="match status" value="1"/>
</dbReference>
<dbReference type="SMART" id="SM00382">
    <property type="entry name" value="AAA"/>
    <property type="match status" value="1"/>
</dbReference>
<dbReference type="SUPFAM" id="SSF47917">
    <property type="entry name" value="C-terminal domain of alpha and beta subunits of F1 ATP synthase"/>
    <property type="match status" value="1"/>
</dbReference>
<dbReference type="SUPFAM" id="SSF50615">
    <property type="entry name" value="N-terminal domain of alpha and beta subunits of F1 ATP synthase"/>
    <property type="match status" value="1"/>
</dbReference>
<dbReference type="SUPFAM" id="SSF52540">
    <property type="entry name" value="P-loop containing nucleoside triphosphate hydrolases"/>
    <property type="match status" value="1"/>
</dbReference>
<dbReference type="PROSITE" id="PS00152">
    <property type="entry name" value="ATPASE_ALPHA_BETA"/>
    <property type="match status" value="1"/>
</dbReference>
<gene>
    <name evidence="1" type="primary">atpD1</name>
    <name type="ordered locus">BPSL3396</name>
</gene>
<accession>Q63PI0</accession>
<feature type="chain" id="PRO_0000254232" description="ATP synthase subunit beta 1">
    <location>
        <begin position="1"/>
        <end position="464"/>
    </location>
</feature>
<feature type="binding site" evidence="1">
    <location>
        <begin position="153"/>
        <end position="160"/>
    </location>
    <ligand>
        <name>ATP</name>
        <dbReference type="ChEBI" id="CHEBI:30616"/>
    </ligand>
</feature>
<comment type="function">
    <text evidence="1">Produces ATP from ADP in the presence of a proton gradient across the membrane. The catalytic sites are hosted primarily by the beta subunits.</text>
</comment>
<comment type="catalytic activity">
    <reaction evidence="1">
        <text>ATP + H2O + 4 H(+)(in) = ADP + phosphate + 5 H(+)(out)</text>
        <dbReference type="Rhea" id="RHEA:57720"/>
        <dbReference type="ChEBI" id="CHEBI:15377"/>
        <dbReference type="ChEBI" id="CHEBI:15378"/>
        <dbReference type="ChEBI" id="CHEBI:30616"/>
        <dbReference type="ChEBI" id="CHEBI:43474"/>
        <dbReference type="ChEBI" id="CHEBI:456216"/>
        <dbReference type="EC" id="7.1.2.2"/>
    </reaction>
</comment>
<comment type="subunit">
    <text evidence="1">F-type ATPases have 2 components, CF(1) - the catalytic core - and CF(0) - the membrane proton channel. CF(1) has five subunits: alpha(3), beta(3), gamma(1), delta(1), epsilon(1). CF(0) has three main subunits: a(1), b(2) and c(9-12). The alpha and beta chains form an alternating ring which encloses part of the gamma chain. CF(1) is attached to CF(0) by a central stalk formed by the gamma and epsilon chains, while a peripheral stalk is formed by the delta and b chains.</text>
</comment>
<comment type="subcellular location">
    <subcellularLocation>
        <location evidence="1">Cell inner membrane</location>
        <topology evidence="1">Peripheral membrane protein</topology>
    </subcellularLocation>
</comment>
<comment type="similarity">
    <text evidence="1">Belongs to the ATPase alpha/beta chains family.</text>
</comment>
<protein>
    <recommendedName>
        <fullName evidence="1">ATP synthase subunit beta 1</fullName>
        <ecNumber evidence="1">7.1.2.2</ecNumber>
    </recommendedName>
    <alternativeName>
        <fullName evidence="1">ATP synthase F1 sector subunit beta 1</fullName>
    </alternativeName>
    <alternativeName>
        <fullName evidence="1">F-ATPase subunit beta 1</fullName>
    </alternativeName>
</protein>
<name>ATPB1_BURPS</name>
<proteinExistence type="inferred from homology"/>
<sequence>MSTAALVEGKIVQCIGAVIDVEFPRESMPKIYDALILEGSELTLEVQQQLGDGVVRTICLGASDGLRRGVVVKNTGNPISVPVGKPTLGRIMDVLGRPIDEAGPIESENKRSIHQKAPAFDELSPSTELLETGIKVIDLICPFAKGGKVGLFGGAGVGKTVNMMELINNIAKEHGGYSVFAGVGERTREGNDFYHEMKDSNVLDKVALVYGQMNEPPGNRLRVALTGLTMAEHFRDEGLDVLFFVDNIYRFTLAGTEVSALLGRMPSAVGYQPTLAEEMGKLQERITSTKKGSITSVQAVYVPADDLTDPSPATTFGHLDATVVLSRDIASLGIYPAVDPLDSTSRQIDPNVIGEEHYSITRRVQQTLQRYKELRDIIAILGMDELSPEDKLSVARARKIQRFLSQPFHVAEVFTGSPGKYVPLKETIRGFKMIVDGECDHLPEQAFYMVGTIDEAFEKAKKIQ</sequence>
<evidence type="ECO:0000255" key="1">
    <source>
        <dbReference type="HAMAP-Rule" id="MF_01347"/>
    </source>
</evidence>
<reference key="1">
    <citation type="journal article" date="2004" name="Proc. Natl. Acad. Sci. U.S.A.">
        <title>Genomic plasticity of the causative agent of melioidosis, Burkholderia pseudomallei.</title>
        <authorList>
            <person name="Holden M.T.G."/>
            <person name="Titball R.W."/>
            <person name="Peacock S.J."/>
            <person name="Cerdeno-Tarraga A.-M."/>
            <person name="Atkins T."/>
            <person name="Crossman L.C."/>
            <person name="Pitt T."/>
            <person name="Churcher C."/>
            <person name="Mungall K.L."/>
            <person name="Bentley S.D."/>
            <person name="Sebaihia M."/>
            <person name="Thomson N.R."/>
            <person name="Bason N."/>
            <person name="Beacham I.R."/>
            <person name="Brooks K."/>
            <person name="Brown K.A."/>
            <person name="Brown N.F."/>
            <person name="Challis G.L."/>
            <person name="Cherevach I."/>
            <person name="Chillingworth T."/>
            <person name="Cronin A."/>
            <person name="Crossett B."/>
            <person name="Davis P."/>
            <person name="DeShazer D."/>
            <person name="Feltwell T."/>
            <person name="Fraser A."/>
            <person name="Hance Z."/>
            <person name="Hauser H."/>
            <person name="Holroyd S."/>
            <person name="Jagels K."/>
            <person name="Keith K.E."/>
            <person name="Maddison M."/>
            <person name="Moule S."/>
            <person name="Price C."/>
            <person name="Quail M.A."/>
            <person name="Rabbinowitsch E."/>
            <person name="Rutherford K."/>
            <person name="Sanders M."/>
            <person name="Simmonds M."/>
            <person name="Songsivilai S."/>
            <person name="Stevens K."/>
            <person name="Tumapa S."/>
            <person name="Vesaratchavest M."/>
            <person name="Whitehead S."/>
            <person name="Yeats C."/>
            <person name="Barrell B.G."/>
            <person name="Oyston P.C.F."/>
            <person name="Parkhill J."/>
        </authorList>
    </citation>
    <scope>NUCLEOTIDE SEQUENCE [LARGE SCALE GENOMIC DNA]</scope>
    <source>
        <strain>K96243</strain>
    </source>
</reference>